<dbReference type="EMBL" id="Z11505">
    <property type="protein sequence ID" value="CAA77586.2"/>
    <property type="molecule type" value="Genomic_DNA"/>
</dbReference>
<dbReference type="PIR" id="S31129">
    <property type="entry name" value="S31129"/>
</dbReference>
<dbReference type="RefSeq" id="NP_498995.2">
    <property type="nucleotide sequence ID" value="NM_066594.4"/>
</dbReference>
<dbReference type="BioGRID" id="51330">
    <property type="interactions" value="1"/>
</dbReference>
<dbReference type="FunCoup" id="P34484">
    <property type="interactions" value="1540"/>
</dbReference>
<dbReference type="IntAct" id="P34484">
    <property type="interactions" value="1"/>
</dbReference>
<dbReference type="STRING" id="6239.F59B2.9.1"/>
<dbReference type="PaxDb" id="6239-F59B2.9"/>
<dbReference type="EnsemblMetazoa" id="F59B2.9.1">
    <property type="protein sequence ID" value="F59B2.9.1"/>
    <property type="gene ID" value="WBGene00010311"/>
</dbReference>
<dbReference type="GeneID" id="186594"/>
<dbReference type="KEGG" id="cel:CELE_F59B2.9"/>
<dbReference type="UCSC" id="F59B2.9">
    <property type="organism name" value="c. elegans"/>
</dbReference>
<dbReference type="AGR" id="WB:WBGene00010311"/>
<dbReference type="CTD" id="186594"/>
<dbReference type="WormBase" id="F59B2.9">
    <property type="protein sequence ID" value="CE33287"/>
    <property type="gene ID" value="WBGene00010311"/>
</dbReference>
<dbReference type="eggNOG" id="ENOG502TI4S">
    <property type="taxonomic scope" value="Eukaryota"/>
</dbReference>
<dbReference type="GeneTree" id="ENSGT00940000163400"/>
<dbReference type="HOGENOM" id="CLU_052088_2_0_1"/>
<dbReference type="InParanoid" id="P34484"/>
<dbReference type="OMA" id="IWWDFKP"/>
<dbReference type="OrthoDB" id="5782924at2759"/>
<dbReference type="PhylomeDB" id="P34484"/>
<dbReference type="PRO" id="PR:P34484"/>
<dbReference type="Proteomes" id="UP000001940">
    <property type="component" value="Chromosome III"/>
</dbReference>
<dbReference type="Bgee" id="WBGene00010311">
    <property type="expression patterns" value="Expressed in pharyngeal muscle cell (C elegans) and 3 other cell types or tissues"/>
</dbReference>
<dbReference type="InterPro" id="IPR012885">
    <property type="entry name" value="F-box-assoc_dom_typ2"/>
</dbReference>
<dbReference type="InterPro" id="IPR001810">
    <property type="entry name" value="F-box_dom"/>
</dbReference>
<dbReference type="PANTHER" id="PTHR21503">
    <property type="entry name" value="F-BOX-CONTAINING HYPOTHETICAL PROTEIN C.ELEGANS"/>
    <property type="match status" value="1"/>
</dbReference>
<dbReference type="PANTHER" id="PTHR21503:SF49">
    <property type="entry name" value="PROTEIN CBG06869"/>
    <property type="match status" value="1"/>
</dbReference>
<dbReference type="Pfam" id="PF00646">
    <property type="entry name" value="F-box"/>
    <property type="match status" value="1"/>
</dbReference>
<dbReference type="Pfam" id="PF07735">
    <property type="entry name" value="FBA_2"/>
    <property type="match status" value="1"/>
</dbReference>
<dbReference type="PROSITE" id="PS50181">
    <property type="entry name" value="FBOX"/>
    <property type="match status" value="1"/>
</dbReference>
<gene>
    <name type="ORF">F59B2.9</name>
</gene>
<proteinExistence type="predicted"/>
<accession>P34484</accession>
<reference key="1">
    <citation type="journal article" date="1994" name="Nature">
        <title>2.2 Mb of contiguous nucleotide sequence from chromosome III of C. elegans.</title>
        <authorList>
            <person name="Wilson R."/>
            <person name="Ainscough R."/>
            <person name="Anderson K."/>
            <person name="Baynes C."/>
            <person name="Berks M."/>
            <person name="Bonfield J."/>
            <person name="Burton J."/>
            <person name="Connell M."/>
            <person name="Copsey T."/>
            <person name="Cooper J."/>
            <person name="Coulson A."/>
            <person name="Craxton M."/>
            <person name="Dear S."/>
            <person name="Du Z."/>
            <person name="Durbin R."/>
            <person name="Favello A."/>
            <person name="Fraser A."/>
            <person name="Fulton L."/>
            <person name="Gardner A."/>
            <person name="Green P."/>
            <person name="Hawkins T."/>
            <person name="Hillier L."/>
            <person name="Jier M."/>
            <person name="Johnston L."/>
            <person name="Jones M."/>
            <person name="Kershaw J."/>
            <person name="Kirsten J."/>
            <person name="Laisster N."/>
            <person name="Latreille P."/>
            <person name="Lightning J."/>
            <person name="Lloyd C."/>
            <person name="Mortimore B."/>
            <person name="O'Callaghan M."/>
            <person name="Parsons J."/>
            <person name="Percy C."/>
            <person name="Rifken L."/>
            <person name="Roopra A."/>
            <person name="Saunders D."/>
            <person name="Shownkeen R."/>
            <person name="Sims M."/>
            <person name="Smaldon N."/>
            <person name="Smith A."/>
            <person name="Smith M."/>
            <person name="Sonnhammer E."/>
            <person name="Staden R."/>
            <person name="Sulston J."/>
            <person name="Thierry-Mieg J."/>
            <person name="Thomas K."/>
            <person name="Vaudin M."/>
            <person name="Vaughan K."/>
            <person name="Waterston R."/>
            <person name="Watson A."/>
            <person name="Weinstock L."/>
            <person name="Wilkinson-Sproat J."/>
            <person name="Wohldman P."/>
        </authorList>
    </citation>
    <scope>NUCLEOTIDE SEQUENCE [LARGE SCALE GENOMIC DNA]</scope>
    <source>
        <strain>Bristol N2</strain>
    </source>
</reference>
<reference key="2">
    <citation type="journal article" date="1998" name="Science">
        <title>Genome sequence of the nematode C. elegans: a platform for investigating biology.</title>
        <authorList>
            <consortium name="The C. elegans sequencing consortium"/>
        </authorList>
    </citation>
    <scope>NUCLEOTIDE SEQUENCE [LARGE SCALE GENOMIC DNA]</scope>
    <source>
        <strain>Bristol N2</strain>
    </source>
</reference>
<protein>
    <recommendedName>
        <fullName>Uncharacterized protein F59B2.9</fullName>
    </recommendedName>
</protein>
<keyword id="KW-1185">Reference proteome</keyword>
<organism>
    <name type="scientific">Caenorhabditis elegans</name>
    <dbReference type="NCBI Taxonomy" id="6239"/>
    <lineage>
        <taxon>Eukaryota</taxon>
        <taxon>Metazoa</taxon>
        <taxon>Ecdysozoa</taxon>
        <taxon>Nematoda</taxon>
        <taxon>Chromadorea</taxon>
        <taxon>Rhabditida</taxon>
        <taxon>Rhabditina</taxon>
        <taxon>Rhabditomorpha</taxon>
        <taxon>Rhabditoidea</taxon>
        <taxon>Rhabditidae</taxon>
        <taxon>Peloderinae</taxon>
        <taxon>Caenorhabditis</taxon>
    </lineage>
</organism>
<sequence>MSFNLLDLPIVPRQKALKYLEPIDLFELSLCSKRMAQSVRDLKIEASAHFITLTRGQSSVHVQFKERSRAIWWDFKEIFMKKDLKDKRKIGYILFENCEKFRRGAFTLDEFYCHFDNLEEGAAAVSKHFQFLFPGPLNILLSPTVYRHLEFLFFEPSIQKCESFEMCGADIPAKRTMNRIFDKLTIEKKLCIRPKTSENYVIKQALRVEELFLRSARWMTREHLLELNCIVADLSDHNFQCSDFEAFAEKWMNNKSSKVENLRFQWQSDVEFKLENLKTSRWDSTRRERNYIFTMKNESVQIDCSDGFELERNDGRLATFVVEQQEDRTHILYFLVWIELFPEKKRLENLPKTLGPLYKQLEKINRDYPDESSLERLLSNPNLVYTEFLETYKVLKNMDGENRSPSTGQAFRRTIFDKIYNTIDL</sequence>
<evidence type="ECO:0000255" key="1">
    <source>
        <dbReference type="PROSITE-ProRule" id="PRU00080"/>
    </source>
</evidence>
<name>YMJ9_CAEEL</name>
<feature type="chain" id="PRO_0000065381" description="Uncharacterized protein F59B2.9">
    <location>
        <begin position="1"/>
        <end position="425"/>
    </location>
</feature>
<feature type="domain" description="F-box" evidence="1">
    <location>
        <begin position="2"/>
        <end position="53"/>
    </location>
</feature>